<dbReference type="PIR" id="S33730">
    <property type="entry name" value="S33730"/>
</dbReference>
<dbReference type="SMR" id="P32413"/>
<dbReference type="GO" id="GO:0005576">
    <property type="term" value="C:extracellular region"/>
    <property type="evidence" value="ECO:0007669"/>
    <property type="project" value="UniProtKB-SubCell"/>
</dbReference>
<dbReference type="GO" id="GO:0042742">
    <property type="term" value="P:defense response to bacterium"/>
    <property type="evidence" value="ECO:0007669"/>
    <property type="project" value="UniProtKB-KW"/>
</dbReference>
<dbReference type="GO" id="GO:0031640">
    <property type="term" value="P:killing of cells of another organism"/>
    <property type="evidence" value="ECO:0007669"/>
    <property type="project" value="UniProtKB-KW"/>
</dbReference>
<dbReference type="InterPro" id="IPR012521">
    <property type="entry name" value="Antimicrobial_frog_2"/>
</dbReference>
<dbReference type="Pfam" id="PF08023">
    <property type="entry name" value="Antimicrobial_2"/>
    <property type="match status" value="1"/>
</dbReference>
<proteinExistence type="evidence at protein level"/>
<sequence>GIMDTLKNLAKTAGKGALQSLLNKASCKLSGQC</sequence>
<reference key="1">
    <citation type="journal article" date="1993" name="FEBS Lett.">
        <title>Novel antimicrobial peptides from skin secretion of the European frog Rana esculenta.</title>
        <authorList>
            <person name="Simmaco M."/>
            <person name="Mignogna G."/>
            <person name="Barra D."/>
            <person name="Bossa F."/>
        </authorList>
    </citation>
    <scope>PROTEIN SEQUENCE</scope>
    <scope>DISULFIDE BOND</scope>
    <source>
        <tissue>Skin secretion</tissue>
    </source>
</reference>
<name>BR2_PELLE</name>
<evidence type="ECO:0000269" key="1">
    <source>
    </source>
</evidence>
<evidence type="ECO:0000305" key="2"/>
<organism>
    <name type="scientific">Pelophylax lessonae</name>
    <name type="common">Pool frog</name>
    <name type="synonym">Rana lessonae</name>
    <dbReference type="NCBI Taxonomy" id="45623"/>
    <lineage>
        <taxon>Eukaryota</taxon>
        <taxon>Metazoa</taxon>
        <taxon>Chordata</taxon>
        <taxon>Craniata</taxon>
        <taxon>Vertebrata</taxon>
        <taxon>Euteleostomi</taxon>
        <taxon>Amphibia</taxon>
        <taxon>Batrachia</taxon>
        <taxon>Anura</taxon>
        <taxon>Neobatrachia</taxon>
        <taxon>Ranoidea</taxon>
        <taxon>Ranidae</taxon>
        <taxon>Pelophylax</taxon>
    </lineage>
</organism>
<keyword id="KW-0878">Amphibian defense peptide</keyword>
<keyword id="KW-0044">Antibiotic</keyword>
<keyword id="KW-0929">Antimicrobial</keyword>
<keyword id="KW-0204">Cytolysis</keyword>
<keyword id="KW-0903">Direct protein sequencing</keyword>
<keyword id="KW-1015">Disulfide bond</keyword>
<keyword id="KW-0354">Hemolysis</keyword>
<keyword id="KW-0964">Secreted</keyword>
<accession>P32413</accession>
<feature type="peptide" id="PRO_0000044642" description="Brevinin-2E">
    <location>
        <begin position="1"/>
        <end position="33"/>
    </location>
</feature>
<feature type="disulfide bond" evidence="1">
    <location>
        <begin position="27"/>
        <end position="33"/>
    </location>
</feature>
<protein>
    <recommendedName>
        <fullName>Brevinin-2E</fullName>
    </recommendedName>
</protein>
<comment type="function">
    <text>Shows antibacterial activity against representative Gram-negative and Gram-positive bacterial species, and hemolytic activity.</text>
</comment>
<comment type="subcellular location">
    <subcellularLocation>
        <location>Secreted</location>
    </subcellularLocation>
</comment>
<comment type="tissue specificity">
    <text>Expressed by the skin glands.</text>
</comment>
<comment type="similarity">
    <text evidence="2">Belongs to the frog skin active peptide (FSAP) family. Brevinin subfamily.</text>
</comment>